<sequence>AFSEECPYTVNDYSQENGPNIFALRKRFPLGMNDEDEEGKEALAIKDKLPGGLDEYQNQLYGICNETCTTCGPAAIDYVPADAPNGYAYGGSAHDGSHGNLRGHDNKGSEGYGYEAPYNPGFNGAPGSNGMQNYVPPHGAGYSAPYGVPHGAAHGSRYSSFSSVNKYGKHGDEKHHSSKKHEGNDGEGEKKKKSKKHKDHDGEKKKSKKHKDNEDAESVKSKKHKSHDCEKKKSKKHKDNEDAESVKSKKSVKEKGEKHNGKKPCSKKTNEEKKKKK</sequence>
<reference key="1">
    <citation type="journal article" date="1987" name="EMBO J.">
        <title>cDNA sequence encoding a Plasmodium falciparum protein associated with knobs and localization of the protein to electron-dense regions in membranes of infected erythrocytes.</title>
        <authorList>
            <person name="Ardeshir F."/>
            <person name="Flint J.E."/>
            <person name="Matsumoto Y."/>
            <person name="Aikawa M."/>
            <person name="Reese R.T."/>
            <person name="Stamley H."/>
        </authorList>
    </citation>
    <scope>NUCLEOTIDE SEQUENCE [MRNA]</scope>
</reference>
<accession>P05229</accession>
<protein>
    <recommendedName>
        <fullName>Knob-associated histidine-rich protein</fullName>
        <shortName>KAHRP</shortName>
    </recommendedName>
</protein>
<evidence type="ECO:0000256" key="1">
    <source>
        <dbReference type="SAM" id="MobiDB-lite"/>
    </source>
</evidence>
<keyword id="KW-0461">Malaria</keyword>
<keyword id="KW-0677">Repeat</keyword>
<keyword id="KW-0964">Secreted</keyword>
<feature type="chain" id="PRO_0000217189" description="Knob-associated histidine-rich protein">
    <location>
        <begin position="1" status="less than"/>
        <end position="277" status="greater than"/>
    </location>
</feature>
<feature type="region of interest" description="Disordered" evidence="1">
    <location>
        <begin position="95"/>
        <end position="114"/>
    </location>
</feature>
<feature type="region of interest" description="Disordered" evidence="1">
    <location>
        <begin position="162"/>
        <end position="277"/>
    </location>
</feature>
<feature type="compositionally biased region" description="Basic and acidic residues" evidence="1">
    <location>
        <begin position="169"/>
        <end position="190"/>
    </location>
</feature>
<feature type="compositionally biased region" description="Basic and acidic residues" evidence="1">
    <location>
        <begin position="211"/>
        <end position="220"/>
    </location>
</feature>
<feature type="compositionally biased region" description="Basic residues" evidence="1">
    <location>
        <begin position="221"/>
        <end position="237"/>
    </location>
</feature>
<feature type="compositionally biased region" description="Basic and acidic residues" evidence="1">
    <location>
        <begin position="238"/>
        <end position="259"/>
    </location>
</feature>
<feature type="compositionally biased region" description="Basic and acidic residues" evidence="1">
    <location>
        <begin position="268"/>
        <end position="277"/>
    </location>
</feature>
<feature type="non-terminal residue">
    <location>
        <position position="1"/>
    </location>
</feature>
<feature type="non-terminal residue">
    <location>
        <position position="277"/>
    </location>
</feature>
<proteinExistence type="evidence at transcript level"/>
<comment type="function">
    <text>KAHRP might mimick human histidine-rich glycoproteins to anchor host thrombospondin or a parasite analog in a binding complex with the endothelial cell receptor.</text>
</comment>
<comment type="subcellular location">
    <subcellularLocation>
        <location>Secreted</location>
    </subcellularLocation>
    <text>Cytoplasmic side of the membrane of infected erythrocytes.</text>
</comment>
<name>KNOB_PLAFD</name>
<organism>
    <name type="scientific">Plasmodium falciparum (isolate CDC / Honduras)</name>
    <dbReference type="NCBI Taxonomy" id="5836"/>
    <lineage>
        <taxon>Eukaryota</taxon>
        <taxon>Sar</taxon>
        <taxon>Alveolata</taxon>
        <taxon>Apicomplexa</taxon>
        <taxon>Aconoidasida</taxon>
        <taxon>Haemosporida</taxon>
        <taxon>Plasmodiidae</taxon>
        <taxon>Plasmodium</taxon>
        <taxon>Plasmodium (Laverania)</taxon>
    </lineage>
</organism>
<dbReference type="EMBL" id="Y00063">
    <property type="protein sequence ID" value="CAA68270.1"/>
    <property type="molecule type" value="mRNA"/>
</dbReference>
<dbReference type="PIR" id="S14431">
    <property type="entry name" value="S14431"/>
</dbReference>
<dbReference type="BMRB" id="P05229"/>
<dbReference type="GO" id="GO:0005576">
    <property type="term" value="C:extracellular region"/>
    <property type="evidence" value="ECO:0007669"/>
    <property type="project" value="UniProtKB-SubCell"/>
</dbReference>